<protein>
    <recommendedName>
        <fullName evidence="1">Large ribosomal subunit protein uL6</fullName>
    </recommendedName>
    <alternativeName>
        <fullName evidence="2">50S ribosomal protein L6</fullName>
    </alternativeName>
</protein>
<sequence>MSRIGKMPIPLSNQAKIEIKDSNIRVSGPKGTLEQRLTDQVTVSEENGLVTVLRIDDSKKAKAQHGLYRMLISNMVDGVTKGFTRKLEIAGVGYRAELKNDLLALTLGYSHMIYFKAPDEIKIEVPDQVTVLVSGIDKALVGQVAAKIRSFRKPEPYRGKGIKYEGEVIRRKEGKAAGK</sequence>
<accession>B4SBW2</accession>
<gene>
    <name evidence="1" type="primary">rplF</name>
    <name type="ordered locus">Ppha_0304</name>
</gene>
<organism>
    <name type="scientific">Pelodictyon phaeoclathratiforme (strain DSM 5477 / BU-1)</name>
    <dbReference type="NCBI Taxonomy" id="324925"/>
    <lineage>
        <taxon>Bacteria</taxon>
        <taxon>Pseudomonadati</taxon>
        <taxon>Chlorobiota</taxon>
        <taxon>Chlorobiia</taxon>
        <taxon>Chlorobiales</taxon>
        <taxon>Chlorobiaceae</taxon>
        <taxon>Chlorobium/Pelodictyon group</taxon>
        <taxon>Pelodictyon</taxon>
    </lineage>
</organism>
<evidence type="ECO:0000255" key="1">
    <source>
        <dbReference type="HAMAP-Rule" id="MF_01365"/>
    </source>
</evidence>
<evidence type="ECO:0000305" key="2"/>
<proteinExistence type="inferred from homology"/>
<comment type="function">
    <text evidence="1">This protein binds to the 23S rRNA, and is important in its secondary structure. It is located near the subunit interface in the base of the L7/L12 stalk, and near the tRNA binding site of the peptidyltransferase center.</text>
</comment>
<comment type="subunit">
    <text evidence="1">Part of the 50S ribosomal subunit.</text>
</comment>
<comment type="similarity">
    <text evidence="1">Belongs to the universal ribosomal protein uL6 family.</text>
</comment>
<name>RL6_PELPB</name>
<feature type="chain" id="PRO_1000144025" description="Large ribosomal subunit protein uL6">
    <location>
        <begin position="1"/>
        <end position="179"/>
    </location>
</feature>
<dbReference type="EMBL" id="CP001110">
    <property type="protein sequence ID" value="ACF42637.1"/>
    <property type="molecule type" value="Genomic_DNA"/>
</dbReference>
<dbReference type="RefSeq" id="WP_012507133.1">
    <property type="nucleotide sequence ID" value="NC_011060.1"/>
</dbReference>
<dbReference type="SMR" id="B4SBW2"/>
<dbReference type="STRING" id="324925.Ppha_0304"/>
<dbReference type="KEGG" id="pph:Ppha_0304"/>
<dbReference type="eggNOG" id="COG0097">
    <property type="taxonomic scope" value="Bacteria"/>
</dbReference>
<dbReference type="HOGENOM" id="CLU_065464_1_2_10"/>
<dbReference type="OrthoDB" id="9805007at2"/>
<dbReference type="Proteomes" id="UP000002724">
    <property type="component" value="Chromosome"/>
</dbReference>
<dbReference type="GO" id="GO:0022625">
    <property type="term" value="C:cytosolic large ribosomal subunit"/>
    <property type="evidence" value="ECO:0007669"/>
    <property type="project" value="TreeGrafter"/>
</dbReference>
<dbReference type="GO" id="GO:0019843">
    <property type="term" value="F:rRNA binding"/>
    <property type="evidence" value="ECO:0007669"/>
    <property type="project" value="UniProtKB-UniRule"/>
</dbReference>
<dbReference type="GO" id="GO:0003735">
    <property type="term" value="F:structural constituent of ribosome"/>
    <property type="evidence" value="ECO:0007669"/>
    <property type="project" value="InterPro"/>
</dbReference>
<dbReference type="GO" id="GO:0002181">
    <property type="term" value="P:cytoplasmic translation"/>
    <property type="evidence" value="ECO:0007669"/>
    <property type="project" value="TreeGrafter"/>
</dbReference>
<dbReference type="FunFam" id="3.90.930.12:FF:000001">
    <property type="entry name" value="50S ribosomal protein L6"/>
    <property type="match status" value="1"/>
</dbReference>
<dbReference type="FunFam" id="3.90.930.12:FF:000002">
    <property type="entry name" value="50S ribosomal protein L6"/>
    <property type="match status" value="1"/>
</dbReference>
<dbReference type="Gene3D" id="3.90.930.12">
    <property type="entry name" value="Ribosomal protein L6, alpha-beta domain"/>
    <property type="match status" value="2"/>
</dbReference>
<dbReference type="HAMAP" id="MF_01365_B">
    <property type="entry name" value="Ribosomal_uL6_B"/>
    <property type="match status" value="1"/>
</dbReference>
<dbReference type="InterPro" id="IPR000702">
    <property type="entry name" value="Ribosomal_uL6-like"/>
</dbReference>
<dbReference type="InterPro" id="IPR036789">
    <property type="entry name" value="Ribosomal_uL6-like_a/b-dom_sf"/>
</dbReference>
<dbReference type="InterPro" id="IPR020040">
    <property type="entry name" value="Ribosomal_uL6_a/b-dom"/>
</dbReference>
<dbReference type="InterPro" id="IPR019906">
    <property type="entry name" value="Ribosomal_uL6_bac-type"/>
</dbReference>
<dbReference type="NCBIfam" id="TIGR03654">
    <property type="entry name" value="L6_bact"/>
    <property type="match status" value="1"/>
</dbReference>
<dbReference type="PANTHER" id="PTHR11655">
    <property type="entry name" value="60S/50S RIBOSOMAL PROTEIN L6/L9"/>
    <property type="match status" value="1"/>
</dbReference>
<dbReference type="PANTHER" id="PTHR11655:SF14">
    <property type="entry name" value="LARGE RIBOSOMAL SUBUNIT PROTEIN UL6M"/>
    <property type="match status" value="1"/>
</dbReference>
<dbReference type="Pfam" id="PF00347">
    <property type="entry name" value="Ribosomal_L6"/>
    <property type="match status" value="2"/>
</dbReference>
<dbReference type="PIRSF" id="PIRSF002162">
    <property type="entry name" value="Ribosomal_L6"/>
    <property type="match status" value="1"/>
</dbReference>
<dbReference type="PRINTS" id="PR00059">
    <property type="entry name" value="RIBOSOMALL6"/>
</dbReference>
<dbReference type="SUPFAM" id="SSF56053">
    <property type="entry name" value="Ribosomal protein L6"/>
    <property type="match status" value="2"/>
</dbReference>
<keyword id="KW-1185">Reference proteome</keyword>
<keyword id="KW-0687">Ribonucleoprotein</keyword>
<keyword id="KW-0689">Ribosomal protein</keyword>
<keyword id="KW-0694">RNA-binding</keyword>
<keyword id="KW-0699">rRNA-binding</keyword>
<reference key="1">
    <citation type="submission" date="2008-06" db="EMBL/GenBank/DDBJ databases">
        <title>Complete sequence of Pelodictyon phaeoclathratiforme BU-1.</title>
        <authorList>
            <consortium name="US DOE Joint Genome Institute"/>
            <person name="Lucas S."/>
            <person name="Copeland A."/>
            <person name="Lapidus A."/>
            <person name="Glavina del Rio T."/>
            <person name="Dalin E."/>
            <person name="Tice H."/>
            <person name="Bruce D."/>
            <person name="Goodwin L."/>
            <person name="Pitluck S."/>
            <person name="Schmutz J."/>
            <person name="Larimer F."/>
            <person name="Land M."/>
            <person name="Hauser L."/>
            <person name="Kyrpides N."/>
            <person name="Mikhailova N."/>
            <person name="Liu Z."/>
            <person name="Li T."/>
            <person name="Zhao F."/>
            <person name="Overmann J."/>
            <person name="Bryant D.A."/>
            <person name="Richardson P."/>
        </authorList>
    </citation>
    <scope>NUCLEOTIDE SEQUENCE [LARGE SCALE GENOMIC DNA]</scope>
    <source>
        <strain>DSM 5477 / BU-1</strain>
    </source>
</reference>